<evidence type="ECO:0000250" key="1"/>
<evidence type="ECO:0000250" key="2">
    <source>
        <dbReference type="UniProtKB" id="P00157"/>
    </source>
</evidence>
<evidence type="ECO:0000255" key="3">
    <source>
        <dbReference type="PROSITE-ProRule" id="PRU00967"/>
    </source>
</evidence>
<evidence type="ECO:0000255" key="4">
    <source>
        <dbReference type="PROSITE-ProRule" id="PRU00968"/>
    </source>
</evidence>
<comment type="function">
    <text evidence="2">Component of the ubiquinol-cytochrome c reductase complex (complex III or cytochrome b-c1 complex) that is part of the mitochondrial respiratory chain. The b-c1 complex mediates electron transfer from ubiquinol to cytochrome c. Contributes to the generation of a proton gradient across the mitochondrial membrane that is then used for ATP synthesis.</text>
</comment>
<comment type="cofactor">
    <cofactor evidence="2">
        <name>heme b</name>
        <dbReference type="ChEBI" id="CHEBI:60344"/>
    </cofactor>
    <text evidence="2">Binds 2 heme b groups non-covalently.</text>
</comment>
<comment type="subunit">
    <text evidence="2">The cytochrome bc1 complex contains 11 subunits: 3 respiratory subunits (MT-CYB, CYC1 and UQCRFS1), 2 core proteins (UQCRC1 and UQCRC2) and 6 low-molecular weight proteins (UQCRH/QCR6, UQCRB/QCR7, UQCRQ/QCR8, UQCR10/QCR9, UQCR11/QCR10 and a cleavage product of UQCRFS1). This cytochrome bc1 complex then forms a dimer.</text>
</comment>
<comment type="subcellular location">
    <subcellularLocation>
        <location evidence="2">Mitochondrion inner membrane</location>
        <topology evidence="2">Multi-pass membrane protein</topology>
    </subcellularLocation>
</comment>
<comment type="miscellaneous">
    <text evidence="1">Heme 1 (or BL or b562) is low-potential and absorbs at about 562 nm, and heme 2 (or BH or b566) is high-potential and absorbs at about 566 nm.</text>
</comment>
<comment type="similarity">
    <text evidence="3 4">Belongs to the cytochrome b family.</text>
</comment>
<comment type="caution">
    <text evidence="2">The full-length protein contains only eight transmembrane helices, not nine as predicted by bioinformatics tools.</text>
</comment>
<name>CYB_MACCA</name>
<gene>
    <name type="primary">MT-CYB</name>
    <name type="synonym">COB</name>
    <name type="synonym">CYTB</name>
    <name type="synonym">MTCYB</name>
</gene>
<protein>
    <recommendedName>
        <fullName>Cytochrome b</fullName>
    </recommendedName>
    <alternativeName>
        <fullName>Complex III subunit 3</fullName>
    </alternativeName>
    <alternativeName>
        <fullName>Complex III subunit III</fullName>
    </alternativeName>
    <alternativeName>
        <fullName>Cytochrome b-c1 complex subunit 3</fullName>
    </alternativeName>
    <alternativeName>
        <fullName>Ubiquinol-cytochrome-c reductase complex cytochrome b subunit</fullName>
    </alternativeName>
</protein>
<geneLocation type="mitochondrion"/>
<keyword id="KW-0249">Electron transport</keyword>
<keyword id="KW-0349">Heme</keyword>
<keyword id="KW-0408">Iron</keyword>
<keyword id="KW-0472">Membrane</keyword>
<keyword id="KW-0479">Metal-binding</keyword>
<keyword id="KW-0496">Mitochondrion</keyword>
<keyword id="KW-0999">Mitochondrion inner membrane</keyword>
<keyword id="KW-0679">Respiratory chain</keyword>
<keyword id="KW-0812">Transmembrane</keyword>
<keyword id="KW-1133">Transmembrane helix</keyword>
<keyword id="KW-0813">Transport</keyword>
<keyword id="KW-0830">Ubiquinone</keyword>
<reference key="1">
    <citation type="submission" date="2003-09" db="EMBL/GenBank/DDBJ databases">
        <title>Molecular evidence for unrecognized biodiversity in the bat genus Micronycteris (Phyllostomidae), with descriptions of two new subgenera.</title>
        <authorList>
            <person name="Porter C.A."/>
            <person name="Hoofer S.R."/>
            <person name="Cline C.A."/>
            <person name="Hoffmann F.G."/>
            <person name="Baker R.J."/>
        </authorList>
    </citation>
    <scope>NUCLEOTIDE SEQUENCE [GENOMIC DNA]</scope>
</reference>
<dbReference type="EMBL" id="AY380744">
    <property type="protein sequence ID" value="AAR91757.1"/>
    <property type="molecule type" value="Genomic_DNA"/>
</dbReference>
<dbReference type="SMR" id="Q597F2"/>
<dbReference type="GO" id="GO:0005743">
    <property type="term" value="C:mitochondrial inner membrane"/>
    <property type="evidence" value="ECO:0007669"/>
    <property type="project" value="UniProtKB-SubCell"/>
</dbReference>
<dbReference type="GO" id="GO:0045275">
    <property type="term" value="C:respiratory chain complex III"/>
    <property type="evidence" value="ECO:0007669"/>
    <property type="project" value="InterPro"/>
</dbReference>
<dbReference type="GO" id="GO:0046872">
    <property type="term" value="F:metal ion binding"/>
    <property type="evidence" value="ECO:0007669"/>
    <property type="project" value="UniProtKB-KW"/>
</dbReference>
<dbReference type="GO" id="GO:0008121">
    <property type="term" value="F:ubiquinol-cytochrome-c reductase activity"/>
    <property type="evidence" value="ECO:0007669"/>
    <property type="project" value="InterPro"/>
</dbReference>
<dbReference type="GO" id="GO:0006122">
    <property type="term" value="P:mitochondrial electron transport, ubiquinol to cytochrome c"/>
    <property type="evidence" value="ECO:0007669"/>
    <property type="project" value="TreeGrafter"/>
</dbReference>
<dbReference type="CDD" id="cd00290">
    <property type="entry name" value="cytochrome_b_C"/>
    <property type="match status" value="1"/>
</dbReference>
<dbReference type="CDD" id="cd00284">
    <property type="entry name" value="Cytochrome_b_N"/>
    <property type="match status" value="1"/>
</dbReference>
<dbReference type="FunFam" id="1.20.810.10:FF:000002">
    <property type="entry name" value="Cytochrome b"/>
    <property type="match status" value="1"/>
</dbReference>
<dbReference type="Gene3D" id="1.20.810.10">
    <property type="entry name" value="Cytochrome Bc1 Complex, Chain C"/>
    <property type="match status" value="1"/>
</dbReference>
<dbReference type="InterPro" id="IPR005798">
    <property type="entry name" value="Cyt_b/b6_C"/>
</dbReference>
<dbReference type="InterPro" id="IPR036150">
    <property type="entry name" value="Cyt_b/b6_C_sf"/>
</dbReference>
<dbReference type="InterPro" id="IPR005797">
    <property type="entry name" value="Cyt_b/b6_N"/>
</dbReference>
<dbReference type="InterPro" id="IPR027387">
    <property type="entry name" value="Cytb/b6-like_sf"/>
</dbReference>
<dbReference type="InterPro" id="IPR030689">
    <property type="entry name" value="Cytochrome_b"/>
</dbReference>
<dbReference type="InterPro" id="IPR048260">
    <property type="entry name" value="Cytochrome_b_C_euk/bac"/>
</dbReference>
<dbReference type="InterPro" id="IPR048259">
    <property type="entry name" value="Cytochrome_b_N_euk/bac"/>
</dbReference>
<dbReference type="InterPro" id="IPR016174">
    <property type="entry name" value="Di-haem_cyt_TM"/>
</dbReference>
<dbReference type="PANTHER" id="PTHR19271">
    <property type="entry name" value="CYTOCHROME B"/>
    <property type="match status" value="1"/>
</dbReference>
<dbReference type="PANTHER" id="PTHR19271:SF16">
    <property type="entry name" value="CYTOCHROME B"/>
    <property type="match status" value="1"/>
</dbReference>
<dbReference type="Pfam" id="PF00032">
    <property type="entry name" value="Cytochrom_B_C"/>
    <property type="match status" value="1"/>
</dbReference>
<dbReference type="Pfam" id="PF00033">
    <property type="entry name" value="Cytochrome_B"/>
    <property type="match status" value="1"/>
</dbReference>
<dbReference type="PIRSF" id="PIRSF038885">
    <property type="entry name" value="COB"/>
    <property type="match status" value="1"/>
</dbReference>
<dbReference type="SUPFAM" id="SSF81648">
    <property type="entry name" value="a domain/subunit of cytochrome bc1 complex (Ubiquinol-cytochrome c reductase)"/>
    <property type="match status" value="1"/>
</dbReference>
<dbReference type="SUPFAM" id="SSF81342">
    <property type="entry name" value="Transmembrane di-heme cytochromes"/>
    <property type="match status" value="1"/>
</dbReference>
<dbReference type="PROSITE" id="PS51003">
    <property type="entry name" value="CYTB_CTER"/>
    <property type="match status" value="1"/>
</dbReference>
<dbReference type="PROSITE" id="PS51002">
    <property type="entry name" value="CYTB_NTER"/>
    <property type="match status" value="1"/>
</dbReference>
<feature type="chain" id="PRO_0000254812" description="Cytochrome b">
    <location>
        <begin position="1"/>
        <end position="379"/>
    </location>
</feature>
<feature type="transmembrane region" description="Helical" evidence="2">
    <location>
        <begin position="33"/>
        <end position="53"/>
    </location>
</feature>
<feature type="transmembrane region" description="Helical" evidence="2">
    <location>
        <begin position="77"/>
        <end position="98"/>
    </location>
</feature>
<feature type="transmembrane region" description="Helical" evidence="2">
    <location>
        <begin position="113"/>
        <end position="133"/>
    </location>
</feature>
<feature type="transmembrane region" description="Helical" evidence="2">
    <location>
        <begin position="178"/>
        <end position="198"/>
    </location>
</feature>
<feature type="transmembrane region" description="Helical" evidence="2">
    <location>
        <begin position="226"/>
        <end position="246"/>
    </location>
</feature>
<feature type="transmembrane region" description="Helical" evidence="2">
    <location>
        <begin position="288"/>
        <end position="308"/>
    </location>
</feature>
<feature type="transmembrane region" description="Helical" evidence="2">
    <location>
        <begin position="320"/>
        <end position="340"/>
    </location>
</feature>
<feature type="transmembrane region" description="Helical" evidence="2">
    <location>
        <begin position="347"/>
        <end position="367"/>
    </location>
</feature>
<feature type="binding site" description="axial binding residue" evidence="2">
    <location>
        <position position="83"/>
    </location>
    <ligand>
        <name>heme b</name>
        <dbReference type="ChEBI" id="CHEBI:60344"/>
        <label>b562</label>
    </ligand>
    <ligandPart>
        <name>Fe</name>
        <dbReference type="ChEBI" id="CHEBI:18248"/>
    </ligandPart>
</feature>
<feature type="binding site" description="axial binding residue" evidence="2">
    <location>
        <position position="97"/>
    </location>
    <ligand>
        <name>heme b</name>
        <dbReference type="ChEBI" id="CHEBI:60344"/>
        <label>b566</label>
    </ligand>
    <ligandPart>
        <name>Fe</name>
        <dbReference type="ChEBI" id="CHEBI:18248"/>
    </ligandPart>
</feature>
<feature type="binding site" description="axial binding residue" evidence="2">
    <location>
        <position position="182"/>
    </location>
    <ligand>
        <name>heme b</name>
        <dbReference type="ChEBI" id="CHEBI:60344"/>
        <label>b562</label>
    </ligand>
    <ligandPart>
        <name>Fe</name>
        <dbReference type="ChEBI" id="CHEBI:18248"/>
    </ligandPart>
</feature>
<feature type="binding site" description="axial binding residue" evidence="2">
    <location>
        <position position="196"/>
    </location>
    <ligand>
        <name>heme b</name>
        <dbReference type="ChEBI" id="CHEBI:60344"/>
        <label>b566</label>
    </ligand>
    <ligandPart>
        <name>Fe</name>
        <dbReference type="ChEBI" id="CHEBI:18248"/>
    </ligandPart>
</feature>
<feature type="binding site" evidence="2">
    <location>
        <position position="201"/>
    </location>
    <ligand>
        <name>a ubiquinone</name>
        <dbReference type="ChEBI" id="CHEBI:16389"/>
    </ligand>
</feature>
<sequence length="379" mass="42823">MTNIRKTHPLLKIVSTSFVDLPTPSSLSSWWNFGSLLGVCLVVQILTGLFLAMHYTSDTATAFNSVTHICRDVNYGWILRYLHANGASMFFICLYLHVGRGLYYGSYSYLETWNIGMLLLFAIMATAFMGYVLPWGQMSFWGATVITNLLSAIPYIGTELVQWIWGGFSVDKATLTRFFAFHFLLPFIISALVMVHLLFLHETGSNNPTGIPSNPDMIPFHPYYTIKDILGFLIMLTVLSLLVLFSPDLLGDPDNYIPANPLTTPPHIKPEWYFLFAYAILRSIPNKLGGVLALVLSILILAIVPMLHTSKQRSMMFRPMSQCLFWLLVAYLLALTWIGGQPVEHPYILIGQMASVLYFLMILVLMPLTSIMENLLLKW</sequence>
<proteinExistence type="inferred from homology"/>
<organism>
    <name type="scientific">Macrotus californicus</name>
    <name type="common">Californian leaf-nosed bat</name>
    <dbReference type="NCBI Taxonomy" id="9419"/>
    <lineage>
        <taxon>Eukaryota</taxon>
        <taxon>Metazoa</taxon>
        <taxon>Chordata</taxon>
        <taxon>Craniata</taxon>
        <taxon>Vertebrata</taxon>
        <taxon>Euteleostomi</taxon>
        <taxon>Mammalia</taxon>
        <taxon>Eutheria</taxon>
        <taxon>Laurasiatheria</taxon>
        <taxon>Chiroptera</taxon>
        <taxon>Yangochiroptera</taxon>
        <taxon>Phyllostomidae</taxon>
        <taxon>Phyllostominae</taxon>
        <taxon>Macrotus</taxon>
    </lineage>
</organism>
<accession>Q597F2</accession>